<dbReference type="EC" id="4.4.1.11"/>
<dbReference type="EMBL" id="AC009519">
    <property type="protein sequence ID" value="AAF19680.1"/>
    <property type="molecule type" value="Genomic_DNA"/>
</dbReference>
<dbReference type="EMBL" id="CP002684">
    <property type="protein sequence ID" value="AEE34271.1"/>
    <property type="molecule type" value="Genomic_DNA"/>
</dbReference>
<dbReference type="EMBL" id="AF428413">
    <property type="protein sequence ID" value="AAL16181.1"/>
    <property type="molecule type" value="mRNA"/>
</dbReference>
<dbReference type="EMBL" id="AY054546">
    <property type="protein sequence ID" value="AAK96737.1"/>
    <property type="molecule type" value="mRNA"/>
</dbReference>
<dbReference type="EMBL" id="BT006588">
    <property type="protein sequence ID" value="AAP31932.1"/>
    <property type="molecule type" value="mRNA"/>
</dbReference>
<dbReference type="EMBL" id="AK226375">
    <property type="protein sequence ID" value="BAE98522.1"/>
    <property type="molecule type" value="mRNA"/>
</dbReference>
<dbReference type="PIR" id="G96669">
    <property type="entry name" value="G96669"/>
</dbReference>
<dbReference type="RefSeq" id="NP_176647.1">
    <property type="nucleotide sequence ID" value="NM_105141.3"/>
</dbReference>
<dbReference type="SMR" id="Q9SGU9"/>
<dbReference type="FunCoup" id="Q9SGU9">
    <property type="interactions" value="140"/>
</dbReference>
<dbReference type="STRING" id="3702.Q9SGU9"/>
<dbReference type="PaxDb" id="3702-AT1G64660.1"/>
<dbReference type="ProteomicsDB" id="238895"/>
<dbReference type="EnsemblPlants" id="AT1G64660.1">
    <property type="protein sequence ID" value="AT1G64660.1"/>
    <property type="gene ID" value="AT1G64660"/>
</dbReference>
<dbReference type="GeneID" id="842774"/>
<dbReference type="Gramene" id="AT1G64660.1">
    <property type="protein sequence ID" value="AT1G64660.1"/>
    <property type="gene ID" value="AT1G64660"/>
</dbReference>
<dbReference type="KEGG" id="ath:AT1G64660"/>
<dbReference type="Araport" id="AT1G64660"/>
<dbReference type="TAIR" id="AT1G64660">
    <property type="gene designation" value="MGL"/>
</dbReference>
<dbReference type="eggNOG" id="KOG0053">
    <property type="taxonomic scope" value="Eukaryota"/>
</dbReference>
<dbReference type="HOGENOM" id="CLU_018986_2_0_1"/>
<dbReference type="InParanoid" id="Q9SGU9"/>
<dbReference type="OMA" id="YGGMITF"/>
<dbReference type="PhylomeDB" id="Q9SGU9"/>
<dbReference type="BioCyc" id="ARA:AT1G64660-MONOMER"/>
<dbReference type="BioCyc" id="MetaCyc:AT1G64660-MONOMER"/>
<dbReference type="BRENDA" id="4.4.1.11">
    <property type="organism ID" value="399"/>
</dbReference>
<dbReference type="PRO" id="PR:Q9SGU9"/>
<dbReference type="Proteomes" id="UP000006548">
    <property type="component" value="Chromosome 1"/>
</dbReference>
<dbReference type="ExpressionAtlas" id="Q9SGU9">
    <property type="expression patterns" value="baseline and differential"/>
</dbReference>
<dbReference type="GO" id="GO:0005829">
    <property type="term" value="C:cytosol"/>
    <property type="evidence" value="ECO:0000314"/>
    <property type="project" value="TAIR"/>
</dbReference>
<dbReference type="GO" id="GO:0018826">
    <property type="term" value="F:methionine gamma-lyase activity"/>
    <property type="evidence" value="ECO:0000314"/>
    <property type="project" value="UniProtKB"/>
</dbReference>
<dbReference type="GO" id="GO:0030170">
    <property type="term" value="F:pyridoxal phosphate binding"/>
    <property type="evidence" value="ECO:0007669"/>
    <property type="project" value="InterPro"/>
</dbReference>
<dbReference type="GO" id="GO:0009970">
    <property type="term" value="P:cellular response to sulfate starvation"/>
    <property type="evidence" value="ECO:0000270"/>
    <property type="project" value="UniProtKB"/>
</dbReference>
<dbReference type="GO" id="GO:0042631">
    <property type="term" value="P:cellular response to water deprivation"/>
    <property type="evidence" value="ECO:0000270"/>
    <property type="project" value="UniProtKB"/>
</dbReference>
<dbReference type="GO" id="GO:0019458">
    <property type="term" value="P:methionine catabolic process via 2-oxobutanoate"/>
    <property type="evidence" value="ECO:0000304"/>
    <property type="project" value="TAIR"/>
</dbReference>
<dbReference type="GO" id="GO:0051289">
    <property type="term" value="P:protein homotetramerization"/>
    <property type="evidence" value="ECO:0000314"/>
    <property type="project" value="UniProtKB"/>
</dbReference>
<dbReference type="GO" id="GO:0019346">
    <property type="term" value="P:transsulfuration"/>
    <property type="evidence" value="ECO:0007669"/>
    <property type="project" value="InterPro"/>
</dbReference>
<dbReference type="FunFam" id="3.40.640.10:FF:000046">
    <property type="entry name" value="Cystathionine gamma-lyase"/>
    <property type="match status" value="1"/>
</dbReference>
<dbReference type="FunFam" id="3.90.1150.10:FF:000087">
    <property type="entry name" value="Putative methionine gamma-lyase"/>
    <property type="match status" value="1"/>
</dbReference>
<dbReference type="Gene3D" id="3.90.1150.10">
    <property type="entry name" value="Aspartate Aminotransferase, domain 1"/>
    <property type="match status" value="1"/>
</dbReference>
<dbReference type="Gene3D" id="3.40.640.10">
    <property type="entry name" value="Type I PLP-dependent aspartate aminotransferase-like (Major domain)"/>
    <property type="match status" value="1"/>
</dbReference>
<dbReference type="InterPro" id="IPR000277">
    <property type="entry name" value="Cys/Met-Metab_PyrdxlP-dep_enz"/>
</dbReference>
<dbReference type="InterPro" id="IPR015424">
    <property type="entry name" value="PyrdxlP-dep_Trfase"/>
</dbReference>
<dbReference type="InterPro" id="IPR015421">
    <property type="entry name" value="PyrdxlP-dep_Trfase_major"/>
</dbReference>
<dbReference type="InterPro" id="IPR015422">
    <property type="entry name" value="PyrdxlP-dep_Trfase_small"/>
</dbReference>
<dbReference type="PANTHER" id="PTHR11808:SF80">
    <property type="entry name" value="CYSTATHIONINE GAMMA-LYASE"/>
    <property type="match status" value="1"/>
</dbReference>
<dbReference type="PANTHER" id="PTHR11808">
    <property type="entry name" value="TRANS-SULFURATION ENZYME FAMILY MEMBER"/>
    <property type="match status" value="1"/>
</dbReference>
<dbReference type="Pfam" id="PF01053">
    <property type="entry name" value="Cys_Met_Meta_PP"/>
    <property type="match status" value="1"/>
</dbReference>
<dbReference type="PIRSF" id="PIRSF001434">
    <property type="entry name" value="CGS"/>
    <property type="match status" value="1"/>
</dbReference>
<dbReference type="SUPFAM" id="SSF53383">
    <property type="entry name" value="PLP-dependent transferases"/>
    <property type="match status" value="1"/>
</dbReference>
<sequence>MAHFLETQEPLVFSGKKRNDRDDEDGDALVAKKSALAVCDADPAAAIANIRHEFGEHGGVNMSIEASATFTVMEPDTMRRMFTGELGPDNDFYVYSRHFNPTVLNLSRQMAALEGTQAAYCTSSGMSAISSVMLQLCSSGGHVVAASTLYGGTHALLSHFLPRTCNITTSFVDITDHGAVANAIVEGRTQVLYFESVANPTLTVADIPELSRMAHEKGVTVVVDNTFAPMVLSPAKLGADVVVHSISKFISGGADIIAGAVCGSENLVKEMMDLRGGSLMLLGPTMNAKVAFELSERIPHLGLRMREHSHRAQVYAERMRDLGMKVIYPGLETHPQHKLFKGMVNRDYGYGGLLSIDMETEEKANKLMAYLQNATQFGFMAVSLGYYETLMSCSGSSTSSELDPSQKEAAGISPGLVRMSVGYVGTLEQKWTQFEKAFLRM</sequence>
<gene>
    <name type="primary">MGL</name>
    <name type="ordered locus">At1g64660</name>
    <name type="ORF">F1N19.23</name>
</gene>
<keyword id="KW-0963">Cytoplasm</keyword>
<keyword id="KW-0456">Lyase</keyword>
<keyword id="KW-0663">Pyridoxal phosphate</keyword>
<keyword id="KW-1185">Reference proteome</keyword>
<organism>
    <name type="scientific">Arabidopsis thaliana</name>
    <name type="common">Mouse-ear cress</name>
    <dbReference type="NCBI Taxonomy" id="3702"/>
    <lineage>
        <taxon>Eukaryota</taxon>
        <taxon>Viridiplantae</taxon>
        <taxon>Streptophyta</taxon>
        <taxon>Embryophyta</taxon>
        <taxon>Tracheophyta</taxon>
        <taxon>Spermatophyta</taxon>
        <taxon>Magnoliopsida</taxon>
        <taxon>eudicotyledons</taxon>
        <taxon>Gunneridae</taxon>
        <taxon>Pentapetalae</taxon>
        <taxon>rosids</taxon>
        <taxon>malvids</taxon>
        <taxon>Brassicales</taxon>
        <taxon>Brassicaceae</taxon>
        <taxon>Camelineae</taxon>
        <taxon>Arabidopsis</taxon>
    </lineage>
</organism>
<evidence type="ECO:0000250" key="1"/>
<evidence type="ECO:0000256" key="2">
    <source>
        <dbReference type="SAM" id="MobiDB-lite"/>
    </source>
</evidence>
<evidence type="ECO:0000269" key="3">
    <source>
    </source>
</evidence>
<evidence type="ECO:0000269" key="4">
    <source>
    </source>
</evidence>
<evidence type="ECO:0000269" key="5">
    <source>
    </source>
</evidence>
<evidence type="ECO:0000305" key="6"/>
<reference key="1">
    <citation type="journal article" date="2000" name="Nature">
        <title>Sequence and analysis of chromosome 1 of the plant Arabidopsis thaliana.</title>
        <authorList>
            <person name="Theologis A."/>
            <person name="Ecker J.R."/>
            <person name="Palm C.J."/>
            <person name="Federspiel N.A."/>
            <person name="Kaul S."/>
            <person name="White O."/>
            <person name="Alonso J."/>
            <person name="Altafi H."/>
            <person name="Araujo R."/>
            <person name="Bowman C.L."/>
            <person name="Brooks S.Y."/>
            <person name="Buehler E."/>
            <person name="Chan A."/>
            <person name="Chao Q."/>
            <person name="Chen H."/>
            <person name="Cheuk R.F."/>
            <person name="Chin C.W."/>
            <person name="Chung M.K."/>
            <person name="Conn L."/>
            <person name="Conway A.B."/>
            <person name="Conway A.R."/>
            <person name="Creasy T.H."/>
            <person name="Dewar K."/>
            <person name="Dunn P."/>
            <person name="Etgu P."/>
            <person name="Feldblyum T.V."/>
            <person name="Feng J.-D."/>
            <person name="Fong B."/>
            <person name="Fujii C.Y."/>
            <person name="Gill J.E."/>
            <person name="Goldsmith A.D."/>
            <person name="Haas B."/>
            <person name="Hansen N.F."/>
            <person name="Hughes B."/>
            <person name="Huizar L."/>
            <person name="Hunter J.L."/>
            <person name="Jenkins J."/>
            <person name="Johnson-Hopson C."/>
            <person name="Khan S."/>
            <person name="Khaykin E."/>
            <person name="Kim C.J."/>
            <person name="Koo H.L."/>
            <person name="Kremenetskaia I."/>
            <person name="Kurtz D.B."/>
            <person name="Kwan A."/>
            <person name="Lam B."/>
            <person name="Langin-Hooper S."/>
            <person name="Lee A."/>
            <person name="Lee J.M."/>
            <person name="Lenz C.A."/>
            <person name="Li J.H."/>
            <person name="Li Y.-P."/>
            <person name="Lin X."/>
            <person name="Liu S.X."/>
            <person name="Liu Z.A."/>
            <person name="Luros J.S."/>
            <person name="Maiti R."/>
            <person name="Marziali A."/>
            <person name="Militscher J."/>
            <person name="Miranda M."/>
            <person name="Nguyen M."/>
            <person name="Nierman W.C."/>
            <person name="Osborne B.I."/>
            <person name="Pai G."/>
            <person name="Peterson J."/>
            <person name="Pham P.K."/>
            <person name="Rizzo M."/>
            <person name="Rooney T."/>
            <person name="Rowley D."/>
            <person name="Sakano H."/>
            <person name="Salzberg S.L."/>
            <person name="Schwartz J.R."/>
            <person name="Shinn P."/>
            <person name="Southwick A.M."/>
            <person name="Sun H."/>
            <person name="Tallon L.J."/>
            <person name="Tambunga G."/>
            <person name="Toriumi M.J."/>
            <person name="Town C.D."/>
            <person name="Utterback T."/>
            <person name="Van Aken S."/>
            <person name="Vaysberg M."/>
            <person name="Vysotskaia V.S."/>
            <person name="Walker M."/>
            <person name="Wu D."/>
            <person name="Yu G."/>
            <person name="Fraser C.M."/>
            <person name="Venter J.C."/>
            <person name="Davis R.W."/>
        </authorList>
    </citation>
    <scope>NUCLEOTIDE SEQUENCE [LARGE SCALE GENOMIC DNA]</scope>
    <source>
        <strain>cv. Columbia</strain>
    </source>
</reference>
<reference key="2">
    <citation type="journal article" date="2017" name="Plant J.">
        <title>Araport11: a complete reannotation of the Arabidopsis thaliana reference genome.</title>
        <authorList>
            <person name="Cheng C.Y."/>
            <person name="Krishnakumar V."/>
            <person name="Chan A.P."/>
            <person name="Thibaud-Nissen F."/>
            <person name="Schobel S."/>
            <person name="Town C.D."/>
        </authorList>
    </citation>
    <scope>GENOME REANNOTATION</scope>
    <source>
        <strain>cv. Columbia</strain>
    </source>
</reference>
<reference key="3">
    <citation type="journal article" date="2003" name="Science">
        <title>Empirical analysis of transcriptional activity in the Arabidopsis genome.</title>
        <authorList>
            <person name="Yamada K."/>
            <person name="Lim J."/>
            <person name="Dale J.M."/>
            <person name="Chen H."/>
            <person name="Shinn P."/>
            <person name="Palm C.J."/>
            <person name="Southwick A.M."/>
            <person name="Wu H.C."/>
            <person name="Kim C.J."/>
            <person name="Nguyen M."/>
            <person name="Pham P.K."/>
            <person name="Cheuk R.F."/>
            <person name="Karlin-Newmann G."/>
            <person name="Liu S.X."/>
            <person name="Lam B."/>
            <person name="Sakano H."/>
            <person name="Wu T."/>
            <person name="Yu G."/>
            <person name="Miranda M."/>
            <person name="Quach H.L."/>
            <person name="Tripp M."/>
            <person name="Chang C.H."/>
            <person name="Lee J.M."/>
            <person name="Toriumi M.J."/>
            <person name="Chan M.M."/>
            <person name="Tang C.C."/>
            <person name="Onodera C.S."/>
            <person name="Deng J.M."/>
            <person name="Akiyama K."/>
            <person name="Ansari Y."/>
            <person name="Arakawa T."/>
            <person name="Banh J."/>
            <person name="Banno F."/>
            <person name="Bowser L."/>
            <person name="Brooks S.Y."/>
            <person name="Carninci P."/>
            <person name="Chao Q."/>
            <person name="Choy N."/>
            <person name="Enju A."/>
            <person name="Goldsmith A.D."/>
            <person name="Gurjal M."/>
            <person name="Hansen N.F."/>
            <person name="Hayashizaki Y."/>
            <person name="Johnson-Hopson C."/>
            <person name="Hsuan V.W."/>
            <person name="Iida K."/>
            <person name="Karnes M."/>
            <person name="Khan S."/>
            <person name="Koesema E."/>
            <person name="Ishida J."/>
            <person name="Jiang P.X."/>
            <person name="Jones T."/>
            <person name="Kawai J."/>
            <person name="Kamiya A."/>
            <person name="Meyers C."/>
            <person name="Nakajima M."/>
            <person name="Narusaka M."/>
            <person name="Seki M."/>
            <person name="Sakurai T."/>
            <person name="Satou M."/>
            <person name="Tamse R."/>
            <person name="Vaysberg M."/>
            <person name="Wallender E.K."/>
            <person name="Wong C."/>
            <person name="Yamamura Y."/>
            <person name="Yuan S."/>
            <person name="Shinozaki K."/>
            <person name="Davis R.W."/>
            <person name="Theologis A."/>
            <person name="Ecker J.R."/>
        </authorList>
    </citation>
    <scope>NUCLEOTIDE SEQUENCE [LARGE SCALE MRNA]</scope>
    <source>
        <strain>cv. Columbia</strain>
    </source>
</reference>
<reference key="4">
    <citation type="submission" date="2006-07" db="EMBL/GenBank/DDBJ databases">
        <title>Large-scale analysis of RIKEN Arabidopsis full-length (RAFL) cDNAs.</title>
        <authorList>
            <person name="Totoki Y."/>
            <person name="Seki M."/>
            <person name="Ishida J."/>
            <person name="Nakajima M."/>
            <person name="Enju A."/>
            <person name="Kamiya A."/>
            <person name="Narusaka M."/>
            <person name="Shin-i T."/>
            <person name="Nakagawa M."/>
            <person name="Sakamoto N."/>
            <person name="Oishi K."/>
            <person name="Kohara Y."/>
            <person name="Kobayashi M."/>
            <person name="Toyoda A."/>
            <person name="Sakaki Y."/>
            <person name="Sakurai T."/>
            <person name="Iida K."/>
            <person name="Akiyama K."/>
            <person name="Satou M."/>
            <person name="Toyoda T."/>
            <person name="Konagaya A."/>
            <person name="Carninci P."/>
            <person name="Kawai J."/>
            <person name="Hayashizaki Y."/>
            <person name="Shinozaki K."/>
        </authorList>
    </citation>
    <scope>NUCLEOTIDE SEQUENCE [LARGE SCALE MRNA]</scope>
    <source>
        <strain>cv. Columbia</strain>
    </source>
</reference>
<reference key="5">
    <citation type="journal article" date="2006" name="Proc. Natl. Acad. Sci. U.S.A.">
        <title>Methionine catabolism in Arabidopsis cells is initiated by a gamma-cleavage process and leads to S-methylcysteine and isoleucine syntheses.</title>
        <authorList>
            <person name="Rebeille F."/>
            <person name="Jabrin S."/>
            <person name="Bligny R."/>
            <person name="Loizeau K."/>
            <person name="Gambonnet B."/>
            <person name="Van Wilder V."/>
            <person name="Douce R."/>
            <person name="Ravanel S."/>
        </authorList>
    </citation>
    <scope>IDENTIFICATION</scope>
    <scope>CATALYTIC ACTIVITY</scope>
    <scope>TISSUE SPECIFICITY</scope>
    <scope>INDUCTION BY HIGH MET LEVELS</scope>
    <scope>BIOPHYSICOCHEMICAL PROPERTIES</scope>
    <scope>SUBCELLULAR LOCATION</scope>
</reference>
<reference key="6">
    <citation type="journal article" date="2007" name="Plant Cell Physiol.">
        <title>Functional characterization of a methionine gamma-lyase in Arabidopsis and its implication in an alternative to the reverse trans-sulfuration pathway.</title>
        <authorList>
            <person name="Goyer A."/>
            <person name="Collakova E."/>
            <person name="Shachar-Hill Y."/>
            <person name="Hanson A.D."/>
        </authorList>
    </citation>
    <scope>FUNCTION</scope>
    <scope>DISRUPTION PHENOTYPE</scope>
    <scope>CATALYTIC ACTIVITY</scope>
    <scope>TISSUE SPECIFICITY</scope>
    <scope>INDUCTION BY SULFATE DEPRIVATION</scope>
    <scope>SUBUNIT</scope>
    <scope>BIOPHYSICOCHEMICAL PROPERTIES</scope>
    <source>
        <strain>cv. Columbia</strain>
    </source>
</reference>
<reference key="7">
    <citation type="journal article" date="2009" name="Plant Physiol.">
        <title>Arabidopsis methionine gamma-lyase is regulated according to isoleucine biosynthesis needs but plays a subordinate role to threonine deaminase.</title>
        <authorList>
            <person name="Joshi V."/>
            <person name="Jander G."/>
        </authorList>
    </citation>
    <scope>FUNCTION</scope>
    <scope>DISRUPTION PHENOTYPE</scope>
    <scope>INDUCTION BY DROUGHT</scope>
    <source>
        <strain>cv. Columbia</strain>
    </source>
</reference>
<accession>Q9SGU9</accession>
<protein>
    <recommendedName>
        <fullName>Methionine gamma-lyase</fullName>
        <shortName>AtMGL</shortName>
        <ecNumber>4.4.1.11</ecNumber>
    </recommendedName>
    <alternativeName>
        <fullName>L-methioninase</fullName>
    </alternativeName>
</protein>
<comment type="function">
    <text evidence="4 5">Catalyzes the degradation of L-methionine to alpha-ketobutyrate, methanethiol and ammonia. Exhibits a high activity toward L-methionine, L-ethionine, L-homocysteine and seleno-L-methionine, but not L-cysteine. Involved in an alternative cysteine biosynthesis pathway to the reverse trans-sulfuration pathway (methionine-&gt;homocysteine-&gt;cystathionine-&gt;cysteine) in which methanethiol is an intermediate. Also mediates an alternative isoleucine biosynthesis pathway in which 2-ketobutyrate is an intermediate.</text>
</comment>
<comment type="catalytic activity">
    <reaction evidence="3 4">
        <text>L-methionine + H2O = methanethiol + 2-oxobutanoate + NH4(+)</text>
        <dbReference type="Rhea" id="RHEA:23800"/>
        <dbReference type="ChEBI" id="CHEBI:15377"/>
        <dbReference type="ChEBI" id="CHEBI:16007"/>
        <dbReference type="ChEBI" id="CHEBI:16763"/>
        <dbReference type="ChEBI" id="CHEBI:28938"/>
        <dbReference type="ChEBI" id="CHEBI:57844"/>
        <dbReference type="EC" id="4.4.1.11"/>
    </reaction>
</comment>
<comment type="cofactor">
    <cofactor evidence="1">
        <name>pyridoxal 5'-phosphate</name>
        <dbReference type="ChEBI" id="CHEBI:597326"/>
    </cofactor>
</comment>
<comment type="biophysicochemical properties">
    <absorption>
        <max evidence="3 4">422 nm</max>
    </absorption>
    <kinetics>
        <KM evidence="3">10 mM for L-methionine (at pH 7.2 and 30 degrees Celsius)</KM>
        <KM evidence="4">72 mM for L-methionine (at pH 8 and 30 degrees Celsius)</KM>
        <KM evidence="4">14 mM for L-ethionine (at pH 8 and 30 degrees Celsius)</KM>
        <KM evidence="4">92 mM for L-homocysteine (at pH 8 and 30 degrees Celsius)</KM>
        <KM evidence="4">40 mM for seleno-L-methionine (at pH 8 and 30 degrees Celsius)</KM>
        <Vmax evidence="4">194.0 nmol/min/mg enzyme with L-methionine as substrate (at pH 8 and 30 degrees Celsius)</Vmax>
        <Vmax evidence="4">182.0 nmol/min/mg enzyme with L-ethionine as substrate (at pH 8 and 30 degrees Celsius)</Vmax>
        <Vmax evidence="4">743.0 nmol/min/mg enzyme with L-homocysteine as substrate (at pH 8 and 30 degrees Celsius)</Vmax>
        <Vmax evidence="4">238.0 nmol/min/mg enzyme with seleno-L-methionine as substrate (at pH 8 and 30 degrees Celsius)</Vmax>
        <text evidence="4">kcat is 9.5 sec(-1) with L-methionine as substrate, 8.9 sec(-1) with L-ethionine as substrate, 36.2 sec(-1) with L-homocysteine as substrate and 11.6 sec(-1) with seleno-L-methionine as substrate at pH 8 and 30 degrees Celsius.</text>
    </kinetics>
</comment>
<comment type="subunit">
    <text evidence="4">Homotetramer.</text>
</comment>
<comment type="subcellular location">
    <subcellularLocation>
        <location evidence="3">Cytoplasm</location>
    </subcellularLocation>
</comment>
<comment type="tissue specificity">
    <text evidence="3 4">Expressed in roots, stems, siliques, leaves, flowers and seeds after imbibition (at protein level). Transcripts accumulate in dry mature seeds, but at protein level, only present upon imbibition.</text>
</comment>
<comment type="induction">
    <text evidence="3 4 5">By sulfate deprivation and high methionine levels. Up-regulated by drought.</text>
</comment>
<comment type="disruption phenotype">
    <text evidence="4 5">Increased leaves, flowers and seeds methionine content, and leaf and root S-methylmethionine content under conditions of sulfate starvation. Reduced MGL-mediated isoleucine biosynthesis from methionine.</text>
</comment>
<comment type="similarity">
    <text evidence="6">Belongs to the trans-sulfuration enzymes family.</text>
</comment>
<name>MGL_ARATH</name>
<feature type="chain" id="PRO_0000420159" description="Methionine gamma-lyase">
    <location>
        <begin position="1"/>
        <end position="441"/>
    </location>
</feature>
<feature type="region of interest" description="Disordered" evidence="2">
    <location>
        <begin position="1"/>
        <end position="25"/>
    </location>
</feature>
<feature type="modified residue" description="N6-(pyridoxal phosphate)lysine" evidence="1">
    <location>
        <position position="248"/>
    </location>
</feature>
<proteinExistence type="evidence at protein level"/>